<protein>
    <recommendedName>
        <fullName evidence="1">Queuine tRNA-ribosyltransferase</fullName>
        <ecNumber evidence="1">2.4.2.29</ecNumber>
    </recommendedName>
    <alternativeName>
        <fullName evidence="1">Guanine insertion enzyme</fullName>
    </alternativeName>
    <alternativeName>
        <fullName evidence="1">tRNA-guanine transglycosylase</fullName>
    </alternativeName>
</protein>
<proteinExistence type="inferred from homology"/>
<accession>O51749</accession>
<reference key="1">
    <citation type="journal article" date="1997" name="Nature">
        <title>Genomic sequence of a Lyme disease spirochaete, Borrelia burgdorferi.</title>
        <authorList>
            <person name="Fraser C.M."/>
            <person name="Casjens S."/>
            <person name="Huang W.M."/>
            <person name="Sutton G.G."/>
            <person name="Clayton R.A."/>
            <person name="Lathigra R."/>
            <person name="White O."/>
            <person name="Ketchum K.A."/>
            <person name="Dodson R.J."/>
            <person name="Hickey E.K."/>
            <person name="Gwinn M.L."/>
            <person name="Dougherty B.A."/>
            <person name="Tomb J.-F."/>
            <person name="Fleischmann R.D."/>
            <person name="Richardson D.L."/>
            <person name="Peterson J.D."/>
            <person name="Kerlavage A.R."/>
            <person name="Quackenbush J."/>
            <person name="Salzberg S.L."/>
            <person name="Hanson M."/>
            <person name="van Vugt R."/>
            <person name="Palmer N."/>
            <person name="Adams M.D."/>
            <person name="Gocayne J.D."/>
            <person name="Weidman J.F."/>
            <person name="Utterback T.R."/>
            <person name="Watthey L."/>
            <person name="McDonald L.A."/>
            <person name="Artiach P."/>
            <person name="Bowman C."/>
            <person name="Garland S.A."/>
            <person name="Fujii C."/>
            <person name="Cotton M.D."/>
            <person name="Horst K."/>
            <person name="Roberts K.M."/>
            <person name="Hatch B."/>
            <person name="Smith H.O."/>
            <person name="Venter J.C."/>
        </authorList>
    </citation>
    <scope>NUCLEOTIDE SEQUENCE [LARGE SCALE GENOMIC DNA]</scope>
    <source>
        <strain>ATCC 35210 / DSM 4680 / CIP 102532 / B31</strain>
    </source>
</reference>
<keyword id="KW-0328">Glycosyltransferase</keyword>
<keyword id="KW-0479">Metal-binding</keyword>
<keyword id="KW-0671">Queuosine biosynthesis</keyword>
<keyword id="KW-1185">Reference proteome</keyword>
<keyword id="KW-0808">Transferase</keyword>
<keyword id="KW-0819">tRNA processing</keyword>
<keyword id="KW-0862">Zinc</keyword>
<dbReference type="EC" id="2.4.2.29" evidence="1"/>
<dbReference type="EMBL" id="AE000783">
    <property type="protein sequence ID" value="AAC67147.1"/>
    <property type="molecule type" value="Genomic_DNA"/>
</dbReference>
<dbReference type="PIR" id="H70200">
    <property type="entry name" value="H70200"/>
</dbReference>
<dbReference type="RefSeq" id="NP_212943.1">
    <property type="nucleotide sequence ID" value="NC_001318.1"/>
</dbReference>
<dbReference type="RefSeq" id="WP_010889823.1">
    <property type="nucleotide sequence ID" value="NC_001318.1"/>
</dbReference>
<dbReference type="SMR" id="O51749"/>
<dbReference type="STRING" id="224326.BB_0809"/>
<dbReference type="PaxDb" id="224326-BB_0809"/>
<dbReference type="EnsemblBacteria" id="AAC67147">
    <property type="protein sequence ID" value="AAC67147"/>
    <property type="gene ID" value="BB_0809"/>
</dbReference>
<dbReference type="KEGG" id="bbu:BB_0809"/>
<dbReference type="PATRIC" id="fig|224326.49.peg.1201"/>
<dbReference type="HOGENOM" id="CLU_022060_0_1_12"/>
<dbReference type="OrthoDB" id="9805417at2"/>
<dbReference type="UniPathway" id="UPA00392"/>
<dbReference type="Proteomes" id="UP000001807">
    <property type="component" value="Chromosome"/>
</dbReference>
<dbReference type="GO" id="GO:0005737">
    <property type="term" value="C:cytoplasm"/>
    <property type="evidence" value="ECO:0007669"/>
    <property type="project" value="TreeGrafter"/>
</dbReference>
<dbReference type="GO" id="GO:0046872">
    <property type="term" value="F:metal ion binding"/>
    <property type="evidence" value="ECO:0007669"/>
    <property type="project" value="UniProtKB-KW"/>
</dbReference>
<dbReference type="GO" id="GO:0008479">
    <property type="term" value="F:tRNA-guanosine(34) queuine transglycosylase activity"/>
    <property type="evidence" value="ECO:0007669"/>
    <property type="project" value="UniProtKB-UniRule"/>
</dbReference>
<dbReference type="GO" id="GO:0008616">
    <property type="term" value="P:queuosine biosynthetic process"/>
    <property type="evidence" value="ECO:0007669"/>
    <property type="project" value="UniProtKB-UniRule"/>
</dbReference>
<dbReference type="GO" id="GO:0002099">
    <property type="term" value="P:tRNA wobble guanine modification"/>
    <property type="evidence" value="ECO:0007669"/>
    <property type="project" value="TreeGrafter"/>
</dbReference>
<dbReference type="GO" id="GO:0101030">
    <property type="term" value="P:tRNA-guanine transglycosylation"/>
    <property type="evidence" value="ECO:0007669"/>
    <property type="project" value="InterPro"/>
</dbReference>
<dbReference type="Gene3D" id="3.20.20.105">
    <property type="entry name" value="Queuine tRNA-ribosyltransferase-like"/>
    <property type="match status" value="1"/>
</dbReference>
<dbReference type="HAMAP" id="MF_00168">
    <property type="entry name" value="Q_tRNA_Tgt"/>
    <property type="match status" value="1"/>
</dbReference>
<dbReference type="InterPro" id="IPR050076">
    <property type="entry name" value="ArchSynthase1/Queuine_TRR"/>
</dbReference>
<dbReference type="InterPro" id="IPR004803">
    <property type="entry name" value="TGT"/>
</dbReference>
<dbReference type="InterPro" id="IPR036511">
    <property type="entry name" value="TGT-like_sf"/>
</dbReference>
<dbReference type="InterPro" id="IPR002616">
    <property type="entry name" value="tRNA_ribo_trans-like"/>
</dbReference>
<dbReference type="NCBIfam" id="TIGR00430">
    <property type="entry name" value="Q_tRNA_tgt"/>
    <property type="match status" value="1"/>
</dbReference>
<dbReference type="NCBIfam" id="TIGR00449">
    <property type="entry name" value="tgt_general"/>
    <property type="match status" value="1"/>
</dbReference>
<dbReference type="PANTHER" id="PTHR46499">
    <property type="entry name" value="QUEUINE TRNA-RIBOSYLTRANSFERASE"/>
    <property type="match status" value="1"/>
</dbReference>
<dbReference type="PANTHER" id="PTHR46499:SF1">
    <property type="entry name" value="QUEUINE TRNA-RIBOSYLTRANSFERASE"/>
    <property type="match status" value="1"/>
</dbReference>
<dbReference type="Pfam" id="PF01702">
    <property type="entry name" value="TGT"/>
    <property type="match status" value="1"/>
</dbReference>
<dbReference type="SUPFAM" id="SSF51713">
    <property type="entry name" value="tRNA-guanine transglycosylase"/>
    <property type="match status" value="1"/>
</dbReference>
<gene>
    <name evidence="1" type="primary">tgt</name>
    <name type="ordered locus">BB_0809</name>
</gene>
<name>TGT_BORBU</name>
<feature type="chain" id="PRO_0000135453" description="Queuine tRNA-ribosyltransferase">
    <location>
        <begin position="1"/>
        <end position="375"/>
    </location>
</feature>
<feature type="region of interest" description="RNA binding" evidence="1">
    <location>
        <begin position="248"/>
        <end position="254"/>
    </location>
</feature>
<feature type="region of interest" description="RNA binding; important for wobble base 34 recognition" evidence="1">
    <location>
        <begin position="272"/>
        <end position="276"/>
    </location>
</feature>
<feature type="active site" description="Proton acceptor" evidence="1">
    <location>
        <position position="90"/>
    </location>
</feature>
<feature type="active site" description="Nucleophile" evidence="1">
    <location>
        <position position="267"/>
    </location>
</feature>
<feature type="binding site" evidence="1">
    <location>
        <begin position="90"/>
        <end position="94"/>
    </location>
    <ligand>
        <name>substrate</name>
    </ligand>
</feature>
<feature type="binding site" evidence="1">
    <location>
        <position position="144"/>
    </location>
    <ligand>
        <name>substrate</name>
    </ligand>
</feature>
<feature type="binding site" evidence="1">
    <location>
        <position position="190"/>
    </location>
    <ligand>
        <name>substrate</name>
    </ligand>
</feature>
<feature type="binding site" evidence="1">
    <location>
        <position position="217"/>
    </location>
    <ligand>
        <name>substrate</name>
    </ligand>
</feature>
<feature type="binding site" evidence="1">
    <location>
        <position position="305"/>
    </location>
    <ligand>
        <name>Zn(2+)</name>
        <dbReference type="ChEBI" id="CHEBI:29105"/>
    </ligand>
</feature>
<feature type="binding site" evidence="1">
    <location>
        <position position="307"/>
    </location>
    <ligand>
        <name>Zn(2+)</name>
        <dbReference type="ChEBI" id="CHEBI:29105"/>
    </ligand>
</feature>
<feature type="binding site" evidence="1">
    <location>
        <position position="310"/>
    </location>
    <ligand>
        <name>Zn(2+)</name>
        <dbReference type="ChEBI" id="CHEBI:29105"/>
    </ligand>
</feature>
<feature type="binding site" evidence="1">
    <location>
        <position position="336"/>
    </location>
    <ligand>
        <name>Zn(2+)</name>
        <dbReference type="ChEBI" id="CHEBI:29105"/>
    </ligand>
</feature>
<organism>
    <name type="scientific">Borreliella burgdorferi (strain ATCC 35210 / DSM 4680 / CIP 102532 / B31)</name>
    <name type="common">Borrelia burgdorferi</name>
    <dbReference type="NCBI Taxonomy" id="224326"/>
    <lineage>
        <taxon>Bacteria</taxon>
        <taxon>Pseudomonadati</taxon>
        <taxon>Spirochaetota</taxon>
        <taxon>Spirochaetia</taxon>
        <taxon>Spirochaetales</taxon>
        <taxon>Borreliaceae</taxon>
        <taxon>Borreliella</taxon>
    </lineage>
</organism>
<comment type="function">
    <text evidence="1">Catalyzes the base-exchange of a guanine (G) residue with the queuine precursor 7-aminomethyl-7-deazaguanine (PreQ1) at position 34 (anticodon wobble position) in tRNAs with GU(N) anticodons (tRNA-Asp, -Asn, -His and -Tyr). Catalysis occurs through a double-displacement mechanism. The nucleophile active site attacks the C1' of nucleotide 34 to detach the guanine base from the RNA, forming a covalent enzyme-RNA intermediate. The proton acceptor active site deprotonates the incoming PreQ1, allowing a nucleophilic attack on the C1' of the ribose to form the product. After dissociation, two additional enzymatic reactions on the tRNA convert PreQ1 to queuine (Q), resulting in the hypermodified nucleoside queuosine (7-(((4,5-cis-dihydroxy-2-cyclopenten-1-yl)amino)methyl)-7-deazaguanosine).</text>
</comment>
<comment type="catalytic activity">
    <reaction evidence="1">
        <text>7-aminomethyl-7-carbaguanine + guanosine(34) in tRNA = 7-aminomethyl-7-carbaguanosine(34) in tRNA + guanine</text>
        <dbReference type="Rhea" id="RHEA:24104"/>
        <dbReference type="Rhea" id="RHEA-COMP:10341"/>
        <dbReference type="Rhea" id="RHEA-COMP:10342"/>
        <dbReference type="ChEBI" id="CHEBI:16235"/>
        <dbReference type="ChEBI" id="CHEBI:58703"/>
        <dbReference type="ChEBI" id="CHEBI:74269"/>
        <dbReference type="ChEBI" id="CHEBI:82833"/>
        <dbReference type="EC" id="2.4.2.29"/>
    </reaction>
</comment>
<comment type="cofactor">
    <cofactor evidence="1">
        <name>Zn(2+)</name>
        <dbReference type="ChEBI" id="CHEBI:29105"/>
    </cofactor>
    <text evidence="1">Binds 1 zinc ion per subunit.</text>
</comment>
<comment type="pathway">
    <text evidence="1">tRNA modification; tRNA-queuosine biosynthesis.</text>
</comment>
<comment type="subunit">
    <text evidence="1">Homodimer. Within each dimer, one monomer is responsible for RNA recognition and catalysis, while the other monomer binds to the replacement base PreQ1.</text>
</comment>
<comment type="similarity">
    <text evidence="1">Belongs to the queuine tRNA-ribosyltransferase family.</text>
</comment>
<sequence>MFSVIKNDKHFNARVGFLNLPHGRVDIPCFMPVGTLGAMKGLKHAVLEKLECNLMLANTYHLYLRLGIKTVEKYVGLHNFTIWNKNFLTDSGGFRVFSFSDLRKIDLKGVHFKSHIDGSYHYFTSEGIFAMQEIFGSDIIMPLDICSSYGIDYNEANLYTNITTNWASSTFKSSKNRKEGYNGLLFLITQGNFFKDLRKRSINDILELDSPGIAIGGISVGEPREKYLEILEYSFLLIPKEKPRYVMGIGTPHYILNAIYYGIDIFDCFNPARITRHGSLLTDNGIMCIGRKEYKDDTSKVEKNCICTLCKRYSRGYLRHLIKSKELFGIVLASEHNIHYMFRLISKIRAAILNDDFLNFRTSYLKKYEEENFDE</sequence>
<evidence type="ECO:0000255" key="1">
    <source>
        <dbReference type="HAMAP-Rule" id="MF_00168"/>
    </source>
</evidence>